<feature type="chain" id="PRO_0000088783" description="Chromatin modification-related protein EAF3">
    <location>
        <begin position="1"/>
        <end position="401"/>
    </location>
</feature>
<feature type="domain" description="Tudor-knot" evidence="1">
    <location>
        <begin position="13"/>
        <end position="98"/>
    </location>
</feature>
<feature type="domain" description="MRG" evidence="2">
    <location>
        <begin position="216"/>
        <end position="399"/>
    </location>
</feature>
<feature type="region of interest" description="Disordered" evidence="3">
    <location>
        <begin position="39"/>
        <end position="65"/>
    </location>
</feature>
<feature type="region of interest" description="Disordered" evidence="3">
    <location>
        <begin position="117"/>
        <end position="210"/>
    </location>
</feature>
<feature type="compositionally biased region" description="Polar residues" evidence="3">
    <location>
        <begin position="39"/>
        <end position="53"/>
    </location>
</feature>
<feature type="compositionally biased region" description="Basic and acidic residues" evidence="3">
    <location>
        <begin position="54"/>
        <end position="63"/>
    </location>
</feature>
<feature type="compositionally biased region" description="Basic and acidic residues" evidence="3">
    <location>
        <begin position="117"/>
        <end position="126"/>
    </location>
</feature>
<feature type="compositionally biased region" description="Low complexity" evidence="3">
    <location>
        <begin position="153"/>
        <end position="190"/>
    </location>
</feature>
<feature type="modified residue" description="Phosphoserine" evidence="12">
    <location>
        <position position="201"/>
    </location>
</feature>
<feature type="helix" evidence="14">
    <location>
        <begin position="3"/>
        <end position="6"/>
    </location>
</feature>
<feature type="strand" evidence="16">
    <location>
        <begin position="7"/>
        <end position="9"/>
    </location>
</feature>
<feature type="strand" evidence="15">
    <location>
        <begin position="13"/>
        <end position="18"/>
    </location>
</feature>
<feature type="strand" evidence="15">
    <location>
        <begin position="21"/>
        <end position="32"/>
    </location>
</feature>
<feature type="turn" evidence="15">
    <location>
        <begin position="33"/>
        <end position="36"/>
    </location>
</feature>
<feature type="strand" evidence="15">
    <location>
        <begin position="37"/>
        <end position="40"/>
    </location>
</feature>
<feature type="strand" evidence="13">
    <location>
        <begin position="47"/>
        <end position="50"/>
    </location>
</feature>
<feature type="strand" evidence="14">
    <location>
        <begin position="54"/>
        <end position="56"/>
    </location>
</feature>
<feature type="strand" evidence="17">
    <location>
        <begin position="58"/>
        <end position="60"/>
    </location>
</feature>
<feature type="turn" evidence="15">
    <location>
        <begin position="69"/>
        <end position="73"/>
    </location>
</feature>
<feature type="strand" evidence="15">
    <location>
        <begin position="76"/>
        <end position="81"/>
    </location>
</feature>
<feature type="helix" evidence="15">
    <location>
        <begin position="86"/>
        <end position="88"/>
    </location>
</feature>
<feature type="strand" evidence="15">
    <location>
        <begin position="90"/>
        <end position="92"/>
    </location>
</feature>
<feature type="turn" evidence="15">
    <location>
        <begin position="94"/>
        <end position="96"/>
    </location>
</feature>
<feature type="strand" evidence="18">
    <location>
        <begin position="97"/>
        <end position="99"/>
    </location>
</feature>
<feature type="helix" evidence="15">
    <location>
        <begin position="102"/>
        <end position="113"/>
    </location>
</feature>
<feature type="turn" evidence="16">
    <location>
        <begin position="115"/>
        <end position="117"/>
    </location>
</feature>
<feature type="helix" evidence="19">
    <location>
        <begin position="226"/>
        <end position="240"/>
    </location>
</feature>
<feature type="strand" evidence="19">
    <location>
        <begin position="244"/>
        <end position="246"/>
    </location>
</feature>
<feature type="strand" evidence="19">
    <location>
        <begin position="251"/>
        <end position="253"/>
    </location>
</feature>
<feature type="helix" evidence="19">
    <location>
        <begin position="254"/>
        <end position="267"/>
    </location>
</feature>
<feature type="helix" evidence="19">
    <location>
        <begin position="272"/>
        <end position="296"/>
    </location>
</feature>
<feature type="helix" evidence="19">
    <location>
        <begin position="300"/>
        <end position="302"/>
    </location>
</feature>
<feature type="helix" evidence="19">
    <location>
        <begin position="303"/>
        <end position="315"/>
    </location>
</feature>
<feature type="helix" evidence="19">
    <location>
        <begin position="322"/>
        <end position="324"/>
    </location>
</feature>
<feature type="helix" evidence="19">
    <location>
        <begin position="328"/>
        <end position="343"/>
    </location>
</feature>
<feature type="helix" evidence="19">
    <location>
        <begin position="349"/>
        <end position="368"/>
    </location>
</feature>
<feature type="helix" evidence="19">
    <location>
        <begin position="370"/>
        <end position="374"/>
    </location>
</feature>
<feature type="turn" evidence="19">
    <location>
        <begin position="379"/>
        <end position="381"/>
    </location>
</feature>
<feature type="strand" evidence="19">
    <location>
        <begin position="386"/>
        <end position="389"/>
    </location>
</feature>
<feature type="helix" evidence="19">
    <location>
        <begin position="392"/>
        <end position="399"/>
    </location>
</feature>
<dbReference type="EMBL" id="Z71255">
    <property type="protein sequence ID" value="CAA95019.1"/>
    <property type="molecule type" value="Genomic_DNA"/>
</dbReference>
<dbReference type="EMBL" id="Z49274">
    <property type="protein sequence ID" value="CAA89277.1"/>
    <property type="molecule type" value="Genomic_DNA"/>
</dbReference>
<dbReference type="EMBL" id="BK006949">
    <property type="protein sequence ID" value="DAA11449.1"/>
    <property type="molecule type" value="Genomic_DNA"/>
</dbReference>
<dbReference type="PIR" id="S54497">
    <property type="entry name" value="S54497"/>
</dbReference>
<dbReference type="RefSeq" id="NP_015348.1">
    <property type="nucleotide sequence ID" value="NM_001184120.1"/>
</dbReference>
<dbReference type="PDB" id="2K3X">
    <property type="method" value="NMR"/>
    <property type="chains" value="A=1-113"/>
</dbReference>
<dbReference type="PDB" id="2K3Y">
    <property type="method" value="NMR"/>
    <property type="chains" value="A=1-115"/>
</dbReference>
<dbReference type="PDB" id="3E9F">
    <property type="method" value="X-ray"/>
    <property type="resolution" value="1.80 A"/>
    <property type="chains" value="A=1-113"/>
</dbReference>
<dbReference type="PDB" id="3E9G">
    <property type="method" value="X-ray"/>
    <property type="resolution" value="2.50 A"/>
    <property type="chains" value="A/B=1-124"/>
</dbReference>
<dbReference type="PDB" id="6K5W">
    <property type="method" value="NMR"/>
    <property type="chains" value="A=1-120"/>
</dbReference>
<dbReference type="PDB" id="7YI0">
    <property type="method" value="EM"/>
    <property type="resolution" value="3.20 A"/>
    <property type="chains" value="C/E=1-401"/>
</dbReference>
<dbReference type="PDB" id="7YI1">
    <property type="method" value="EM"/>
    <property type="resolution" value="2.80 A"/>
    <property type="chains" value="K/L=1-401"/>
</dbReference>
<dbReference type="PDB" id="7YI2">
    <property type="method" value="EM"/>
    <property type="resolution" value="3.40 A"/>
    <property type="chains" value="C=1-401"/>
</dbReference>
<dbReference type="PDB" id="7YI3">
    <property type="method" value="EM"/>
    <property type="resolution" value="3.30 A"/>
    <property type="chains" value="C=1-401"/>
</dbReference>
<dbReference type="PDB" id="7YI4">
    <property type="method" value="EM"/>
    <property type="resolution" value="3.96 A"/>
    <property type="chains" value="C/E=1-401"/>
</dbReference>
<dbReference type="PDB" id="7YI5">
    <property type="method" value="EM"/>
    <property type="resolution" value="3.96 A"/>
    <property type="chains" value="C/E=1-401"/>
</dbReference>
<dbReference type="PDB" id="8HXX">
    <property type="method" value="EM"/>
    <property type="resolution" value="3.00 A"/>
    <property type="chains" value="M/O=1-401"/>
</dbReference>
<dbReference type="PDB" id="8HXY">
    <property type="method" value="EM"/>
    <property type="resolution" value="3.10 A"/>
    <property type="chains" value="M=1-401"/>
</dbReference>
<dbReference type="PDB" id="8HXZ">
    <property type="method" value="EM"/>
    <property type="resolution" value="3.40 A"/>
    <property type="chains" value="M=1-401"/>
</dbReference>
<dbReference type="PDB" id="8HY0">
    <property type="method" value="EM"/>
    <property type="resolution" value="3.10 A"/>
    <property type="chains" value="M/O=1-401"/>
</dbReference>
<dbReference type="PDB" id="8I3F">
    <property type="method" value="X-ray"/>
    <property type="resolution" value="1.62 A"/>
    <property type="chains" value="A=218-400"/>
</dbReference>
<dbReference type="PDB" id="8I3G">
    <property type="method" value="X-ray"/>
    <property type="resolution" value="2.40 A"/>
    <property type="chains" value="A/B=218-401"/>
</dbReference>
<dbReference type="PDB" id="8IHM">
    <property type="method" value="EM"/>
    <property type="resolution" value="3.58 A"/>
    <property type="chains" value="N=13-131"/>
</dbReference>
<dbReference type="PDB" id="8IHN">
    <property type="method" value="EM"/>
    <property type="resolution" value="3.37 A"/>
    <property type="chains" value="N/P=1-401"/>
</dbReference>
<dbReference type="PDB" id="8IHT">
    <property type="method" value="EM"/>
    <property type="resolution" value="3.72 A"/>
    <property type="chains" value="N/P=1-401"/>
</dbReference>
<dbReference type="PDB" id="8JHO">
    <property type="method" value="EM"/>
    <property type="resolution" value="7.60 A"/>
    <property type="chains" value="M/O=1-401"/>
</dbReference>
<dbReference type="PDB" id="8KC7">
    <property type="method" value="EM"/>
    <property type="resolution" value="3.46 A"/>
    <property type="chains" value="D/F=1-401"/>
</dbReference>
<dbReference type="PDB" id="8KD2">
    <property type="method" value="EM"/>
    <property type="resolution" value="3.02 A"/>
    <property type="chains" value="D/F=1-401"/>
</dbReference>
<dbReference type="PDB" id="8KD3">
    <property type="method" value="EM"/>
    <property type="resolution" value="2.90 A"/>
    <property type="chains" value="D/F=1-401"/>
</dbReference>
<dbReference type="PDB" id="8KD4">
    <property type="method" value="EM"/>
    <property type="resolution" value="2.93 A"/>
    <property type="chains" value="D/F=1-401"/>
</dbReference>
<dbReference type="PDB" id="8KD5">
    <property type="method" value="EM"/>
    <property type="resolution" value="2.90 A"/>
    <property type="chains" value="D/F=1-401"/>
</dbReference>
<dbReference type="PDB" id="8KD6">
    <property type="method" value="EM"/>
    <property type="resolution" value="3.07 A"/>
    <property type="chains" value="D/F=1-401"/>
</dbReference>
<dbReference type="PDB" id="8KD7">
    <property type="method" value="EM"/>
    <property type="resolution" value="3.09 A"/>
    <property type="chains" value="D/F=1-401"/>
</dbReference>
<dbReference type="PDB" id="8TOF">
    <property type="method" value="EM"/>
    <property type="resolution" value="2.80 A"/>
    <property type="chains" value="D/E=1-401"/>
</dbReference>
<dbReference type="PDB" id="8W9C">
    <property type="method" value="EM"/>
    <property type="resolution" value="3.30 A"/>
    <property type="chains" value="C/D=1-401"/>
</dbReference>
<dbReference type="PDB" id="8W9D">
    <property type="method" value="EM"/>
    <property type="resolution" value="3.90 A"/>
    <property type="chains" value="C/D/G=1-401"/>
</dbReference>
<dbReference type="PDB" id="8W9E">
    <property type="method" value="EM"/>
    <property type="resolution" value="3.60 A"/>
    <property type="chains" value="C/D/G=1-401"/>
</dbReference>
<dbReference type="PDB" id="8W9F">
    <property type="method" value="EM"/>
    <property type="resolution" value="4.40 A"/>
    <property type="chains" value="C/D/G=1-401"/>
</dbReference>
<dbReference type="PDBsum" id="2K3X"/>
<dbReference type="PDBsum" id="2K3Y"/>
<dbReference type="PDBsum" id="3E9F"/>
<dbReference type="PDBsum" id="3E9G"/>
<dbReference type="PDBsum" id="6K5W"/>
<dbReference type="PDBsum" id="7YI0"/>
<dbReference type="PDBsum" id="7YI1"/>
<dbReference type="PDBsum" id="7YI2"/>
<dbReference type="PDBsum" id="7YI3"/>
<dbReference type="PDBsum" id="7YI4"/>
<dbReference type="PDBsum" id="7YI5"/>
<dbReference type="PDBsum" id="8HXX"/>
<dbReference type="PDBsum" id="8HXY"/>
<dbReference type="PDBsum" id="8HXZ"/>
<dbReference type="PDBsum" id="8HY0"/>
<dbReference type="PDBsum" id="8I3F"/>
<dbReference type="PDBsum" id="8I3G"/>
<dbReference type="PDBsum" id="8IHM"/>
<dbReference type="PDBsum" id="8IHN"/>
<dbReference type="PDBsum" id="8IHT"/>
<dbReference type="PDBsum" id="8JHO"/>
<dbReference type="PDBsum" id="8KC7"/>
<dbReference type="PDBsum" id="8KD2"/>
<dbReference type="PDBsum" id="8KD3"/>
<dbReference type="PDBsum" id="8KD4"/>
<dbReference type="PDBsum" id="8KD5"/>
<dbReference type="PDBsum" id="8KD6"/>
<dbReference type="PDBsum" id="8KD7"/>
<dbReference type="PDBsum" id="8TOF"/>
<dbReference type="PDBsum" id="8W9C"/>
<dbReference type="PDBsum" id="8W9D"/>
<dbReference type="PDBsum" id="8W9E"/>
<dbReference type="PDBsum" id="8W9F"/>
<dbReference type="EMDB" id="EMD-33845"/>
<dbReference type="EMDB" id="EMD-33848"/>
<dbReference type="EMDB" id="EMD-33849"/>
<dbReference type="EMDB" id="EMD-33850"/>
<dbReference type="EMDB" id="EMD-33851"/>
<dbReference type="EMDB" id="EMD-33852"/>
<dbReference type="EMDB" id="EMD-37096"/>
<dbReference type="EMDB" id="EMD-37122"/>
<dbReference type="EMDB" id="EMD-37123"/>
<dbReference type="EMDB" id="EMD-37124"/>
<dbReference type="EMDB" id="EMD-37125"/>
<dbReference type="EMDB" id="EMD-37126"/>
<dbReference type="EMDB" id="EMD-37127"/>
<dbReference type="EMDB" id="EMD-37364"/>
<dbReference type="EMDB" id="EMD-37365"/>
<dbReference type="EMDB" id="EMD-37366"/>
<dbReference type="EMDB" id="EMD-37367"/>
<dbReference type="EMDB" id="EMD-41449"/>
<dbReference type="SMR" id="Q12432"/>
<dbReference type="BioGRID" id="36200">
    <property type="interactions" value="496"/>
</dbReference>
<dbReference type="ComplexPortal" id="CPX-1851">
    <property type="entry name" value="RPD3S histone deacetylase complex"/>
</dbReference>
<dbReference type="ComplexPortal" id="CPX-3155">
    <property type="entry name" value="NuA4 histone acetyltransferase complex"/>
</dbReference>
<dbReference type="ComplexPortal" id="CPX-3184">
    <property type="entry name" value="EAF5-7-3 nucleosome disassembly/reassembly complex"/>
</dbReference>
<dbReference type="DIP" id="DIP-2871N"/>
<dbReference type="FunCoup" id="Q12432">
    <property type="interactions" value="823"/>
</dbReference>
<dbReference type="IntAct" id="Q12432">
    <property type="interactions" value="47"/>
</dbReference>
<dbReference type="MINT" id="Q12432"/>
<dbReference type="STRING" id="4932.YPR023C"/>
<dbReference type="GlyGen" id="Q12432">
    <property type="glycosylation" value="1 site, 1 O-linked glycan (1 site)"/>
</dbReference>
<dbReference type="iPTMnet" id="Q12432"/>
<dbReference type="PaxDb" id="4932-YPR023C"/>
<dbReference type="PeptideAtlas" id="Q12432"/>
<dbReference type="EnsemblFungi" id="YPR023C_mRNA">
    <property type="protein sequence ID" value="YPR023C"/>
    <property type="gene ID" value="YPR023C"/>
</dbReference>
<dbReference type="GeneID" id="856134"/>
<dbReference type="KEGG" id="sce:YPR023C"/>
<dbReference type="AGR" id="SGD:S000006227"/>
<dbReference type="SGD" id="S000006227">
    <property type="gene designation" value="EAF3"/>
</dbReference>
<dbReference type="VEuPathDB" id="FungiDB:YPR023C"/>
<dbReference type="eggNOG" id="KOG3001">
    <property type="taxonomic scope" value="Eukaryota"/>
</dbReference>
<dbReference type="GeneTree" id="ENSGT00950000182965"/>
<dbReference type="HOGENOM" id="CLU_039566_1_1_1"/>
<dbReference type="InParanoid" id="Q12432"/>
<dbReference type="OMA" id="HKFFDIE"/>
<dbReference type="OrthoDB" id="124855at2759"/>
<dbReference type="BioCyc" id="YEAST:G3O-34183-MONOMER"/>
<dbReference type="BioGRID-ORCS" id="856134">
    <property type="hits" value="0 hits in 10 CRISPR screens"/>
</dbReference>
<dbReference type="EvolutionaryTrace" id="Q12432"/>
<dbReference type="PRO" id="PR:Q12432"/>
<dbReference type="Proteomes" id="UP000002311">
    <property type="component" value="Chromosome XVI"/>
</dbReference>
<dbReference type="RNAct" id="Q12432">
    <property type="molecule type" value="protein"/>
</dbReference>
<dbReference type="GO" id="GO:0000123">
    <property type="term" value="C:histone acetyltransferase complex"/>
    <property type="evidence" value="ECO:0000314"/>
    <property type="project" value="SGD"/>
</dbReference>
<dbReference type="GO" id="GO:0035267">
    <property type="term" value="C:NuA4 histone acetyltransferase complex"/>
    <property type="evidence" value="ECO:0000314"/>
    <property type="project" value="SGD"/>
</dbReference>
<dbReference type="GO" id="GO:1990453">
    <property type="term" value="C:nucleosome disassembly/reassembly complex"/>
    <property type="evidence" value="ECO:0000353"/>
    <property type="project" value="ComplexPortal"/>
</dbReference>
<dbReference type="GO" id="GO:0005634">
    <property type="term" value="C:nucleus"/>
    <property type="evidence" value="ECO:0000314"/>
    <property type="project" value="ComplexPortal"/>
</dbReference>
<dbReference type="GO" id="GO:0032221">
    <property type="term" value="C:Rpd3S complex"/>
    <property type="evidence" value="ECO:0000314"/>
    <property type="project" value="SGD"/>
</dbReference>
<dbReference type="GO" id="GO:0140566">
    <property type="term" value="F:histone reader activity"/>
    <property type="evidence" value="ECO:0000314"/>
    <property type="project" value="GO_Central"/>
</dbReference>
<dbReference type="GO" id="GO:0035064">
    <property type="term" value="F:methylated histone binding"/>
    <property type="evidence" value="ECO:0000314"/>
    <property type="project" value="SGD"/>
</dbReference>
<dbReference type="GO" id="GO:0006281">
    <property type="term" value="P:DNA repair"/>
    <property type="evidence" value="ECO:0000314"/>
    <property type="project" value="SGD"/>
</dbReference>
<dbReference type="GO" id="GO:0006335">
    <property type="term" value="P:DNA replication-dependent chromatin assembly"/>
    <property type="evidence" value="ECO:0000315"/>
    <property type="project" value="ComplexPortal"/>
</dbReference>
<dbReference type="GO" id="GO:0006351">
    <property type="term" value="P:DNA-templated transcription"/>
    <property type="evidence" value="ECO:0000303"/>
    <property type="project" value="ComplexPortal"/>
</dbReference>
<dbReference type="GO" id="GO:0060195">
    <property type="term" value="P:negative regulation of antisense RNA transcription"/>
    <property type="evidence" value="ECO:0000315"/>
    <property type="project" value="SGD"/>
</dbReference>
<dbReference type="GO" id="GO:0045892">
    <property type="term" value="P:negative regulation of DNA-templated transcription"/>
    <property type="evidence" value="ECO:0000315"/>
    <property type="project" value="SGD"/>
</dbReference>
<dbReference type="GO" id="GO:0000122">
    <property type="term" value="P:negative regulation of transcription by RNA polymerase II"/>
    <property type="evidence" value="ECO:0000303"/>
    <property type="project" value="ComplexPortal"/>
</dbReference>
<dbReference type="GO" id="GO:0006334">
    <property type="term" value="P:nucleosome assembly"/>
    <property type="evidence" value="ECO:0000303"/>
    <property type="project" value="ComplexPortal"/>
</dbReference>
<dbReference type="GO" id="GO:0006337">
    <property type="term" value="P:nucleosome disassembly"/>
    <property type="evidence" value="ECO:0000315"/>
    <property type="project" value="ComplexPortal"/>
</dbReference>
<dbReference type="GO" id="GO:0032968">
    <property type="term" value="P:positive regulation of transcription elongation by RNA polymerase II"/>
    <property type="evidence" value="ECO:0000315"/>
    <property type="project" value="ComplexPortal"/>
</dbReference>
<dbReference type="GO" id="GO:0030174">
    <property type="term" value="P:regulation of DNA-templated DNA replication initiation"/>
    <property type="evidence" value="ECO:0000315"/>
    <property type="project" value="SGD"/>
</dbReference>
<dbReference type="GO" id="GO:0043487">
    <property type="term" value="P:regulation of RNA stability"/>
    <property type="evidence" value="ECO:0000315"/>
    <property type="project" value="SGD"/>
</dbReference>
<dbReference type="GO" id="GO:0006357">
    <property type="term" value="P:regulation of transcription by RNA polymerase II"/>
    <property type="evidence" value="ECO:0000315"/>
    <property type="project" value="SGD"/>
</dbReference>
<dbReference type="GO" id="GO:0006368">
    <property type="term" value="P:transcription elongation by RNA polymerase II"/>
    <property type="evidence" value="ECO:0000316"/>
    <property type="project" value="SGD"/>
</dbReference>
<dbReference type="DisProt" id="DP02466"/>
<dbReference type="FunFam" id="2.30.30.140:FF:000123">
    <property type="entry name" value="Chromatin modification-related protein EAF3"/>
    <property type="match status" value="1"/>
</dbReference>
<dbReference type="FunFam" id="1.10.274.30:FF:000006">
    <property type="entry name" value="Eaf3p"/>
    <property type="match status" value="1"/>
</dbReference>
<dbReference type="Gene3D" id="2.30.30.140">
    <property type="match status" value="1"/>
</dbReference>
<dbReference type="Gene3D" id="1.10.274.30">
    <property type="entry name" value="MRG domain"/>
    <property type="match status" value="1"/>
</dbReference>
<dbReference type="InterPro" id="IPR016197">
    <property type="entry name" value="Chromo-like_dom_sf"/>
</dbReference>
<dbReference type="InterPro" id="IPR000953">
    <property type="entry name" value="Chromo/chromo_shadow_dom"/>
</dbReference>
<dbReference type="InterPro" id="IPR008676">
    <property type="entry name" value="MRG"/>
</dbReference>
<dbReference type="InterPro" id="IPR038217">
    <property type="entry name" value="MRG_C_sf"/>
</dbReference>
<dbReference type="InterPro" id="IPR026541">
    <property type="entry name" value="MRG_dom"/>
</dbReference>
<dbReference type="InterPro" id="IPR053820">
    <property type="entry name" value="MSL3_chromo-like"/>
</dbReference>
<dbReference type="PANTHER" id="PTHR10880">
    <property type="entry name" value="MORTALITY FACTOR 4-LIKE PROTEIN"/>
    <property type="match status" value="1"/>
</dbReference>
<dbReference type="PANTHER" id="PTHR10880:SF15">
    <property type="entry name" value="MSL COMPLEX SUBUNIT 3"/>
    <property type="match status" value="1"/>
</dbReference>
<dbReference type="Pfam" id="PF05712">
    <property type="entry name" value="MRG"/>
    <property type="match status" value="1"/>
</dbReference>
<dbReference type="Pfam" id="PF22732">
    <property type="entry name" value="MSL3_chromo-like"/>
    <property type="match status" value="1"/>
</dbReference>
<dbReference type="SMART" id="SM00298">
    <property type="entry name" value="CHROMO"/>
    <property type="match status" value="1"/>
</dbReference>
<dbReference type="SUPFAM" id="SSF54160">
    <property type="entry name" value="Chromo domain-like"/>
    <property type="match status" value="1"/>
</dbReference>
<dbReference type="PROSITE" id="PS51640">
    <property type="entry name" value="MRG"/>
    <property type="match status" value="1"/>
</dbReference>
<protein>
    <recommendedName>
        <fullName>Chromatin modification-related protein EAF3</fullName>
    </recommendedName>
    <alternativeName>
        <fullName>ESA1-associated factor 3</fullName>
    </alternativeName>
</protein>
<reference key="1">
    <citation type="journal article" date="1997" name="Nature">
        <title>The nucleotide sequence of Saccharomyces cerevisiae chromosome XVI.</title>
        <authorList>
            <person name="Bussey H."/>
            <person name="Storms R.K."/>
            <person name="Ahmed A."/>
            <person name="Albermann K."/>
            <person name="Allen E."/>
            <person name="Ansorge W."/>
            <person name="Araujo R."/>
            <person name="Aparicio A."/>
            <person name="Barrell B.G."/>
            <person name="Badcock K."/>
            <person name="Benes V."/>
            <person name="Botstein D."/>
            <person name="Bowman S."/>
            <person name="Brueckner M."/>
            <person name="Carpenter J."/>
            <person name="Cherry J.M."/>
            <person name="Chung E."/>
            <person name="Churcher C.M."/>
            <person name="Coster F."/>
            <person name="Davis K."/>
            <person name="Davis R.W."/>
            <person name="Dietrich F.S."/>
            <person name="Delius H."/>
            <person name="DiPaolo T."/>
            <person name="Dubois E."/>
            <person name="Duesterhoeft A."/>
            <person name="Duncan M."/>
            <person name="Floeth M."/>
            <person name="Fortin N."/>
            <person name="Friesen J.D."/>
            <person name="Fritz C."/>
            <person name="Goffeau A."/>
            <person name="Hall J."/>
            <person name="Hebling U."/>
            <person name="Heumann K."/>
            <person name="Hilbert H."/>
            <person name="Hillier L.W."/>
            <person name="Hunicke-Smith S."/>
            <person name="Hyman R.W."/>
            <person name="Johnston M."/>
            <person name="Kalman S."/>
            <person name="Kleine K."/>
            <person name="Komp C."/>
            <person name="Kurdi O."/>
            <person name="Lashkari D."/>
            <person name="Lew H."/>
            <person name="Lin A."/>
            <person name="Lin D."/>
            <person name="Louis E.J."/>
            <person name="Marathe R."/>
            <person name="Messenguy F."/>
            <person name="Mewes H.-W."/>
            <person name="Mirtipati S."/>
            <person name="Moestl D."/>
            <person name="Mueller-Auer S."/>
            <person name="Namath A."/>
            <person name="Nentwich U."/>
            <person name="Oefner P."/>
            <person name="Pearson D."/>
            <person name="Petel F.X."/>
            <person name="Pohl T.M."/>
            <person name="Purnelle B."/>
            <person name="Rajandream M.A."/>
            <person name="Rechmann S."/>
            <person name="Rieger M."/>
            <person name="Riles L."/>
            <person name="Roberts D."/>
            <person name="Schaefer M."/>
            <person name="Scharfe M."/>
            <person name="Scherens B."/>
            <person name="Schramm S."/>
            <person name="Schroeder M."/>
            <person name="Sdicu A.-M."/>
            <person name="Tettelin H."/>
            <person name="Urrestarazu L.A."/>
            <person name="Ushinsky S."/>
            <person name="Vierendeels F."/>
            <person name="Vissers S."/>
            <person name="Voss H."/>
            <person name="Walsh S.V."/>
            <person name="Wambutt R."/>
            <person name="Wang Y."/>
            <person name="Wedler E."/>
            <person name="Wedler H."/>
            <person name="Winnett E."/>
            <person name="Zhong W.-W."/>
            <person name="Zollner A."/>
            <person name="Vo D.H."/>
            <person name="Hani J."/>
        </authorList>
    </citation>
    <scope>NUCLEOTIDE SEQUENCE [LARGE SCALE GENOMIC DNA]</scope>
    <source>
        <strain>ATCC 204508 / S288c</strain>
    </source>
</reference>
<reference key="2">
    <citation type="journal article" date="2014" name="G3 (Bethesda)">
        <title>The reference genome sequence of Saccharomyces cerevisiae: Then and now.</title>
        <authorList>
            <person name="Engel S.R."/>
            <person name="Dietrich F.S."/>
            <person name="Fisk D.G."/>
            <person name="Binkley G."/>
            <person name="Balakrishnan R."/>
            <person name="Costanzo M.C."/>
            <person name="Dwight S.S."/>
            <person name="Hitz B.C."/>
            <person name="Karra K."/>
            <person name="Nash R.S."/>
            <person name="Weng S."/>
            <person name="Wong E.D."/>
            <person name="Lloyd P."/>
            <person name="Skrzypek M.S."/>
            <person name="Miyasato S.R."/>
            <person name="Simison M."/>
            <person name="Cherry J.M."/>
        </authorList>
    </citation>
    <scope>GENOME REANNOTATION</scope>
    <source>
        <strain>ATCC 204508 / S288c</strain>
    </source>
</reference>
<reference key="3">
    <citation type="journal article" date="2001" name="J. Biol. Chem.">
        <title>The yeast NuA4 and Drosophila MSL complexes contain homologous subunits important for transcriptional regulation.</title>
        <authorList>
            <person name="Eisen A."/>
            <person name="Utley R.T."/>
            <person name="Nourani A."/>
            <person name="Allard S."/>
            <person name="Schmidt P."/>
            <person name="Lane W.S."/>
            <person name="Lucchesi J.C."/>
            <person name="Cote J."/>
        </authorList>
    </citation>
    <scope>PROTEIN SEQUENCE OF 2-13; 37-54; 61-75; 86-96; 121-127; 131-143; 157-170; 175-187; 201-227; 230-241; 248-260; 304-311 AND 316-333</scope>
    <scope>IDENTIFICATION IN THE NUA4 COMPLEX</scope>
    <scope>FUNCTION</scope>
</reference>
<reference key="4">
    <citation type="journal article" date="2003" name="Nature">
        <title>Global analysis of protein localization in budding yeast.</title>
        <authorList>
            <person name="Huh W.-K."/>
            <person name="Falvo J.V."/>
            <person name="Gerke L.C."/>
            <person name="Carroll A.S."/>
            <person name="Howson R.W."/>
            <person name="Weissman J.S."/>
            <person name="O'Shea E.K."/>
        </authorList>
    </citation>
    <scope>SUBCELLULAR LOCATION [LARGE SCALE ANALYSIS]</scope>
</reference>
<reference key="5">
    <citation type="journal article" date="2003" name="Nature">
        <title>Global analysis of protein expression in yeast.</title>
        <authorList>
            <person name="Ghaemmaghami S."/>
            <person name="Huh W.-K."/>
            <person name="Bower K."/>
            <person name="Howson R.W."/>
            <person name="Belle A."/>
            <person name="Dephoure N."/>
            <person name="O'Shea E.K."/>
            <person name="Weissman J.S."/>
        </authorList>
    </citation>
    <scope>LEVEL OF PROTEIN EXPRESSION [LARGE SCALE ANALYSIS]</scope>
</reference>
<reference key="6">
    <citation type="journal article" date="2004" name="Mol. Cell. Biol.">
        <title>Eaf3 regulates the global pattern of histone acetylation in Saccharomyces cerevisiae.</title>
        <authorList>
            <person name="Reid J.L."/>
            <person name="Moqtaderi Z."/>
            <person name="Struhl K."/>
        </authorList>
    </citation>
    <scope>FUNCTION</scope>
</reference>
<reference key="7">
    <citation type="journal article" date="2004" name="Mol. Cell. Biol.">
        <title>The Yaf9 component of the SWR1 and NuA4 complexes is required for proper gene expression, histone H4 acetylation, and Htz1 replacement near telomeres.</title>
        <authorList>
            <person name="Zhang H."/>
            <person name="Richardson D.O."/>
            <person name="Roberts D.N."/>
            <person name="Utley R.T."/>
            <person name="Erdjument-Bromage H."/>
            <person name="Tempst P."/>
            <person name="Cote J."/>
            <person name="Cairns B.R."/>
        </authorList>
    </citation>
    <scope>IDENTIFICATION IN THE NUA4 COMPLEX</scope>
    <scope>IDENTIFICATION BY MASS SPECTROMETRY</scope>
</reference>
<reference key="8">
    <citation type="journal article" date="2004" name="PLoS Biol.">
        <title>A protein complex containing the conserved Swi2/Snf2-related ATPase Swr1p deposits histone variant H2A.Z into euchromatin.</title>
        <authorList>
            <person name="Kobor M.S."/>
            <person name="Venkatasubrahmanyam S."/>
            <person name="Meneghini M.D."/>
            <person name="Gin J.W."/>
            <person name="Jennings J.L."/>
            <person name="Link A.J."/>
            <person name="Madhani H.D."/>
            <person name="Rine J."/>
        </authorList>
    </citation>
    <scope>FUNCTION</scope>
    <scope>IDENTIFICATION IN THE NUA4 COMPLEX</scope>
    <scope>IDENTIFICATION BY MASS SPECTROMETRY</scope>
</reference>
<reference key="9">
    <citation type="journal article" date="2004" name="Proc. Natl. Acad. Sci. U.S.A.">
        <title>Regulation of chromosome stability by the histone H2A variant Htz1, the Swr1 chromatin remodeling complex, and the histone acetyltransferase NuA4.</title>
        <authorList>
            <person name="Krogan N.J."/>
            <person name="Baetz K."/>
            <person name="Keogh M.-C."/>
            <person name="Datta N."/>
            <person name="Sawa C."/>
            <person name="Kwok T.C.Y."/>
            <person name="Thompson N.J."/>
            <person name="Davey M.G."/>
            <person name="Pootoolal J."/>
            <person name="Hughes T.R."/>
            <person name="Emili A."/>
            <person name="Buratowski S."/>
            <person name="Hieter P."/>
            <person name="Greenblatt J.F."/>
        </authorList>
    </citation>
    <scope>IDENTIFICATION IN THE NUA4 COMPLEX</scope>
    <scope>IDENTIFICATION BY MASS SPECTROMETRY</scope>
</reference>
<reference key="10">
    <citation type="journal article" date="2008" name="Mol. Cell. Proteomics">
        <title>A multidimensional chromatography technology for in-depth phosphoproteome analysis.</title>
        <authorList>
            <person name="Albuquerque C.P."/>
            <person name="Smolka M.B."/>
            <person name="Payne S.H."/>
            <person name="Bafna V."/>
            <person name="Eng J."/>
            <person name="Zhou H."/>
        </authorList>
    </citation>
    <scope>IDENTIFICATION BY MASS SPECTROMETRY [LARGE SCALE ANALYSIS]</scope>
</reference>
<reference key="11">
    <citation type="journal article" date="2009" name="Science">
        <title>Global analysis of Cdk1 substrate phosphorylation sites provides insights into evolution.</title>
        <authorList>
            <person name="Holt L.J."/>
            <person name="Tuch B.B."/>
            <person name="Villen J."/>
            <person name="Johnson A.D."/>
            <person name="Gygi S.P."/>
            <person name="Morgan D.O."/>
        </authorList>
    </citation>
    <scope>PHOSPHORYLATION [LARGE SCALE ANALYSIS] AT SER-201</scope>
    <scope>IDENTIFICATION BY MASS SPECTROMETRY [LARGE SCALE ANALYSIS]</scope>
</reference>
<gene>
    <name type="primary">EAF3</name>
    <name type="ordered locus">YPR023C</name>
    <name type="ORF">YP9367.03C</name>
</gene>
<sequence>MVDLEQEFALGGRCLAFHGPLMYEAKILKIWDPSSKMYTSIPNDKPGGSSQATKEIKPQKLGEDESIPEEIINGKCFFIHYQGWKSSWDEWVGYDRIRAYNEENIAMKKRLANEAKEAKKSLLEQQKKKKLSTSLGGPSNGGKRKGDSRSNASISKSTSQSFLTSSVSGRKSGRSSANSLHPGSSLRSSSDQNGNDDRRRSSSLSPNMLHHIAGYPTPKISLQIPIKLKSVLVDDWEYVTKDKKICRLPADVTVEMVLNKYEHEVSQELESPGSQSQLSEYCAGLKLYFDKCLGNMLLYRLERLQYDELLKKSSKDQKPLVPIRIYGAIHLLRLISVLPELISSTTMDLQSCQLLIKQTEDFLVWLLMHVDEYFNDKDPNRSDDALYVNTSSQYEGVALGM</sequence>
<name>EAF3_YEAST</name>
<organism>
    <name type="scientific">Saccharomyces cerevisiae (strain ATCC 204508 / S288c)</name>
    <name type="common">Baker's yeast</name>
    <dbReference type="NCBI Taxonomy" id="559292"/>
    <lineage>
        <taxon>Eukaryota</taxon>
        <taxon>Fungi</taxon>
        <taxon>Dikarya</taxon>
        <taxon>Ascomycota</taxon>
        <taxon>Saccharomycotina</taxon>
        <taxon>Saccharomycetes</taxon>
        <taxon>Saccharomycetales</taxon>
        <taxon>Saccharomycetaceae</taxon>
        <taxon>Saccharomyces</taxon>
    </lineage>
</organism>
<evidence type="ECO:0000255" key="1"/>
<evidence type="ECO:0000255" key="2">
    <source>
        <dbReference type="PROSITE-ProRule" id="PRU00972"/>
    </source>
</evidence>
<evidence type="ECO:0000256" key="3">
    <source>
        <dbReference type="SAM" id="MobiDB-lite"/>
    </source>
</evidence>
<evidence type="ECO:0000269" key="4">
    <source>
    </source>
</evidence>
<evidence type="ECO:0000269" key="5">
    <source>
    </source>
</evidence>
<evidence type="ECO:0000269" key="6">
    <source>
    </source>
</evidence>
<evidence type="ECO:0000269" key="7">
    <source>
    </source>
</evidence>
<evidence type="ECO:0000269" key="8">
    <source>
    </source>
</evidence>
<evidence type="ECO:0000269" key="9">
    <source>
    </source>
</evidence>
<evidence type="ECO:0000269" key="10">
    <source>
    </source>
</evidence>
<evidence type="ECO:0000305" key="11"/>
<evidence type="ECO:0007744" key="12">
    <source>
    </source>
</evidence>
<evidence type="ECO:0007829" key="13">
    <source>
        <dbReference type="PDB" id="2K3X"/>
    </source>
</evidence>
<evidence type="ECO:0007829" key="14">
    <source>
        <dbReference type="PDB" id="2K3Y"/>
    </source>
</evidence>
<evidence type="ECO:0007829" key="15">
    <source>
        <dbReference type="PDB" id="3E9F"/>
    </source>
</evidence>
<evidence type="ECO:0007829" key="16">
    <source>
        <dbReference type="PDB" id="6K5W"/>
    </source>
</evidence>
<evidence type="ECO:0007829" key="17">
    <source>
        <dbReference type="PDB" id="7YI1"/>
    </source>
</evidence>
<evidence type="ECO:0007829" key="18">
    <source>
        <dbReference type="PDB" id="8HXY"/>
    </source>
</evidence>
<evidence type="ECO:0007829" key="19">
    <source>
        <dbReference type="PDB" id="8I3F"/>
    </source>
</evidence>
<accession>Q12432</accession>
<accession>D6W433</accession>
<keyword id="KW-0002">3D-structure</keyword>
<keyword id="KW-0156">Chromatin regulator</keyword>
<keyword id="KW-0903">Direct protein sequencing</keyword>
<keyword id="KW-0227">DNA damage</keyword>
<keyword id="KW-0234">DNA repair</keyword>
<keyword id="KW-0539">Nucleus</keyword>
<keyword id="KW-0597">Phosphoprotein</keyword>
<keyword id="KW-1185">Reference proteome</keyword>
<keyword id="KW-0804">Transcription</keyword>
<keyword id="KW-0805">Transcription regulation</keyword>
<proteinExistence type="evidence at protein level"/>
<comment type="function">
    <text evidence="4 7 8">Component of the NuA4 histone acetyltransferase complex which is involved in transcriptional activation of selected genes principally by acetylation of nucleosomal histone H4 and H2A. The NuA4 complex is also involved in DNA repair.</text>
</comment>
<comment type="subunit">
    <text evidence="4 8 9 10">Component of the NuA4 histone acetyltransferase complex composed of at least ACT1, ARP4, YAF9, VID21, SWC4, EAF3, EAF5, EAF6, EAF7, EPL1, ESA1, TRA1 and YNG2.</text>
</comment>
<comment type="interaction">
    <interactant intactId="EBI-6281">
        <id>Q12432</id>
    </interactant>
    <interactant intactId="EBI-22312">
        <id>P39995</id>
        <label>EAF5</label>
    </interactant>
    <organismsDiffer>false</organismsDiffer>
    <experiments>12</experiments>
</comment>
<comment type="interaction">
    <interactant intactId="EBI-6281">
        <id>Q12432</id>
    </interactant>
    <interactant intactId="EBI-6648">
        <id>Q08649</id>
        <label>ESA1</label>
    </interactant>
    <organismsDiffer>false</organismsDiffer>
    <experiments>12</experiments>
</comment>
<comment type="interaction">
    <interactant intactId="EBI-6281">
        <id>Q12432</id>
    </interactant>
    <interactant intactId="EBI-17160">
        <id>P22579</id>
        <label>SIN3</label>
    </interactant>
    <organismsDiffer>false</organismsDiffer>
    <experiments>8</experiments>
</comment>
<comment type="subcellular location">
    <subcellularLocation>
        <location evidence="2 5">Nucleus</location>
    </subcellularLocation>
</comment>
<comment type="miscellaneous">
    <text evidence="6">Present with 1890 molecules/cell in log phase SD medium.</text>
</comment>
<comment type="similarity">
    <text evidence="11">Belongs to the MRG family.</text>
</comment>